<feature type="chain" id="PRO_0000052431" description="Flavohemoprotein">
    <location>
        <begin position="1"/>
        <end position="396"/>
    </location>
</feature>
<feature type="domain" description="Globin" evidence="2">
    <location>
        <begin position="1"/>
        <end position="136"/>
    </location>
</feature>
<feature type="domain" description="FAD-binding FR-type">
    <location>
        <begin position="150"/>
        <end position="255"/>
    </location>
</feature>
<feature type="region of interest" description="Reductase">
    <location>
        <begin position="147"/>
        <end position="396"/>
    </location>
</feature>
<feature type="active site" description="Charge relay system" evidence="4">
    <location>
        <position position="95"/>
    </location>
</feature>
<feature type="active site" description="Charge relay system" evidence="4">
    <location>
        <position position="135"/>
    </location>
</feature>
<feature type="binding site" description="proximal binding residue">
    <location>
        <position position="85"/>
    </location>
    <ligand>
        <name>heme b</name>
        <dbReference type="ChEBI" id="CHEBI:60344"/>
    </ligand>
    <ligandPart>
        <name>Fe</name>
        <dbReference type="ChEBI" id="CHEBI:18248"/>
    </ligandPart>
</feature>
<feature type="binding site">
    <location>
        <position position="188"/>
    </location>
    <ligand>
        <name>FAD</name>
        <dbReference type="ChEBI" id="CHEBI:57692"/>
    </ligand>
</feature>
<feature type="binding site">
    <location>
        <begin position="204"/>
        <end position="207"/>
    </location>
    <ligand>
        <name>FAD</name>
        <dbReference type="ChEBI" id="CHEBI:57692"/>
    </ligand>
</feature>
<feature type="binding site" evidence="1">
    <location>
        <begin position="268"/>
        <end position="273"/>
    </location>
    <ligand>
        <name>NADP(+)</name>
        <dbReference type="ChEBI" id="CHEBI:58349"/>
    </ligand>
</feature>
<feature type="binding site">
    <location>
        <begin position="389"/>
        <end position="392"/>
    </location>
    <ligand>
        <name>FAD</name>
        <dbReference type="ChEBI" id="CHEBI:57692"/>
    </ligand>
</feature>
<feature type="site" description="Involved in heme-bound ligand stabilization and O-O bond activation">
    <location>
        <position position="29"/>
    </location>
</feature>
<feature type="site" description="Influences the redox potential of the prosthetic heme and FAD groups">
    <location>
        <position position="84"/>
    </location>
</feature>
<feature type="site" description="Influences the redox potential of the prosthetic heme and FAD groups">
    <location>
        <position position="388"/>
    </location>
</feature>
<feature type="mutagenesis site" description="15 to 35-fold reduction in NO dioxygenase activity." evidence="3">
    <original>Y</original>
    <variation>E</variation>
    <variation>H</variation>
    <location>
        <position position="29"/>
    </location>
</feature>
<feature type="mutagenesis site" description="30-fold reduction in NO dioxygenase activity, and 80-fold increase in the O(2) dissociation rate constant." evidence="3">
    <original>Y</original>
    <variation>F</variation>
    <location>
        <position position="29"/>
    </location>
</feature>
<feature type="helix" evidence="11">
    <location>
        <begin position="4"/>
        <end position="18"/>
    </location>
</feature>
<feature type="helix" evidence="11">
    <location>
        <begin position="21"/>
        <end position="35"/>
    </location>
</feature>
<feature type="helix" evidence="11">
    <location>
        <begin position="37"/>
        <end position="41"/>
    </location>
</feature>
<feature type="helix" evidence="11">
    <location>
        <begin position="52"/>
        <end position="65"/>
    </location>
</feature>
<feature type="helix" evidence="11">
    <location>
        <begin position="66"/>
        <end position="74"/>
    </location>
</feature>
<feature type="helix" evidence="11">
    <location>
        <begin position="75"/>
        <end position="87"/>
    </location>
</feature>
<feature type="helix" evidence="11">
    <location>
        <begin position="92"/>
        <end position="110"/>
    </location>
</feature>
<feature type="helix" evidence="11">
    <location>
        <begin position="114"/>
        <end position="144"/>
    </location>
</feature>
<feature type="strand" evidence="11">
    <location>
        <begin position="150"/>
        <end position="162"/>
    </location>
</feature>
<feature type="strand" evidence="11">
    <location>
        <begin position="164"/>
        <end position="174"/>
    </location>
</feature>
<feature type="strand" evidence="11">
    <location>
        <begin position="188"/>
        <end position="193"/>
    </location>
</feature>
<feature type="strand" evidence="11">
    <location>
        <begin position="202"/>
        <end position="207"/>
    </location>
</feature>
<feature type="strand" evidence="11">
    <location>
        <begin position="217"/>
        <end position="222"/>
    </location>
</feature>
<feature type="helix" evidence="11">
    <location>
        <begin position="228"/>
        <end position="235"/>
    </location>
</feature>
<feature type="strand" evidence="11">
    <location>
        <begin position="242"/>
        <end position="249"/>
    </location>
</feature>
<feature type="strand" evidence="11">
    <location>
        <begin position="262"/>
        <end position="267"/>
    </location>
</feature>
<feature type="helix" evidence="11">
    <location>
        <begin position="268"/>
        <end position="271"/>
    </location>
</feature>
<feature type="helix" evidence="11">
    <location>
        <begin position="272"/>
        <end position="283"/>
    </location>
</feature>
<feature type="strand" evidence="11">
    <location>
        <begin position="290"/>
        <end position="297"/>
    </location>
</feature>
<feature type="turn" evidence="11">
    <location>
        <begin position="299"/>
        <end position="301"/>
    </location>
</feature>
<feature type="helix" evidence="11">
    <location>
        <begin position="305"/>
        <end position="313"/>
    </location>
</feature>
<feature type="strand" evidence="11">
    <location>
        <begin position="315"/>
        <end position="326"/>
    </location>
</feature>
<feature type="helix" evidence="11">
    <location>
        <begin position="329"/>
        <end position="334"/>
    </location>
</feature>
<feature type="strand" evidence="11">
    <location>
        <begin position="338"/>
        <end position="342"/>
    </location>
</feature>
<feature type="helix" evidence="11">
    <location>
        <begin position="345"/>
        <end position="347"/>
    </location>
</feature>
<feature type="strand" evidence="11">
    <location>
        <begin position="348"/>
        <end position="350"/>
    </location>
</feature>
<feature type="strand" evidence="11">
    <location>
        <begin position="358"/>
        <end position="363"/>
    </location>
</feature>
<feature type="helix" evidence="11">
    <location>
        <begin position="365"/>
        <end position="377"/>
    </location>
</feature>
<feature type="helix" evidence="11">
    <location>
        <begin position="382"/>
        <end position="384"/>
    </location>
</feature>
<feature type="strand" evidence="11">
    <location>
        <begin position="385"/>
        <end position="388"/>
    </location>
</feature>
<feature type="strand" evidence="11">
    <location>
        <begin position="390"/>
        <end position="392"/>
    </location>
</feature>
<keyword id="KW-0002">3D-structure</keyword>
<keyword id="KW-0963">Cytoplasm</keyword>
<keyword id="KW-0216">Detoxification</keyword>
<keyword id="KW-0903">Direct protein sequencing</keyword>
<keyword id="KW-0274">FAD</keyword>
<keyword id="KW-0285">Flavoprotein</keyword>
<keyword id="KW-0349">Heme</keyword>
<keyword id="KW-0408">Iron</keyword>
<keyword id="KW-0479">Metal-binding</keyword>
<keyword id="KW-0520">NAD</keyword>
<keyword id="KW-0521">NADP</keyword>
<keyword id="KW-0560">Oxidoreductase</keyword>
<keyword id="KW-0561">Oxygen transport</keyword>
<keyword id="KW-1185">Reference proteome</keyword>
<keyword id="KW-0813">Transport</keyword>
<dbReference type="EC" id="1.14.12.17"/>
<dbReference type="EMBL" id="X58872">
    <property type="protein sequence ID" value="CAA41682.1"/>
    <property type="molecule type" value="Genomic_DNA"/>
</dbReference>
<dbReference type="EMBL" id="U00096">
    <property type="protein sequence ID" value="AAC75605.1"/>
    <property type="molecule type" value="Genomic_DNA"/>
</dbReference>
<dbReference type="EMBL" id="AP009048">
    <property type="protein sequence ID" value="BAA16460.1"/>
    <property type="molecule type" value="Genomic_DNA"/>
</dbReference>
<dbReference type="EMBL" id="J01620">
    <property type="protein sequence ID" value="AAA23911.1"/>
    <property type="molecule type" value="Genomic_DNA"/>
</dbReference>
<dbReference type="PIR" id="S15992">
    <property type="entry name" value="S15992"/>
</dbReference>
<dbReference type="RefSeq" id="NP_417047.1">
    <property type="nucleotide sequence ID" value="NC_000913.3"/>
</dbReference>
<dbReference type="RefSeq" id="WP_000883122.1">
    <property type="nucleotide sequence ID" value="NZ_STEB01000011.1"/>
</dbReference>
<dbReference type="PDB" id="1GVH">
    <property type="method" value="X-ray"/>
    <property type="resolution" value="2.19 A"/>
    <property type="chains" value="A=1-396"/>
</dbReference>
<dbReference type="PDBsum" id="1GVH"/>
<dbReference type="SMR" id="P24232"/>
<dbReference type="BioGRID" id="4259200">
    <property type="interactions" value="15"/>
</dbReference>
<dbReference type="FunCoup" id="P24232">
    <property type="interactions" value="246"/>
</dbReference>
<dbReference type="IntAct" id="P24232">
    <property type="interactions" value="4"/>
</dbReference>
<dbReference type="STRING" id="511145.b2552"/>
<dbReference type="DrugBank" id="DB03147">
    <property type="generic name" value="Flavin adenine dinucleotide"/>
</dbReference>
<dbReference type="jPOST" id="P24232"/>
<dbReference type="PaxDb" id="511145-b2552"/>
<dbReference type="EnsemblBacteria" id="AAC75605">
    <property type="protein sequence ID" value="AAC75605"/>
    <property type="gene ID" value="b2552"/>
</dbReference>
<dbReference type="GeneID" id="75206245"/>
<dbReference type="GeneID" id="947018"/>
<dbReference type="KEGG" id="ecj:JW2536"/>
<dbReference type="KEGG" id="eco:b2552"/>
<dbReference type="KEGG" id="ecoc:C3026_14130"/>
<dbReference type="PATRIC" id="fig|1411691.4.peg.4182"/>
<dbReference type="EchoBASE" id="EB0451"/>
<dbReference type="eggNOG" id="COG1017">
    <property type="taxonomic scope" value="Bacteria"/>
</dbReference>
<dbReference type="eggNOG" id="COG1018">
    <property type="taxonomic scope" value="Bacteria"/>
</dbReference>
<dbReference type="HOGENOM" id="CLU_003827_12_0_6"/>
<dbReference type="InParanoid" id="P24232"/>
<dbReference type="OMA" id="ADIHYEV"/>
<dbReference type="OrthoDB" id="9801223at2"/>
<dbReference type="PhylomeDB" id="P24232"/>
<dbReference type="BioCyc" id="EcoCyc:EG10456-MONOMER"/>
<dbReference type="BioCyc" id="MetaCyc:EG10456-MONOMER"/>
<dbReference type="BRENDA" id="1.14.12.17">
    <property type="organism ID" value="2026"/>
</dbReference>
<dbReference type="SABIO-RK" id="P24232"/>
<dbReference type="EvolutionaryTrace" id="P24232"/>
<dbReference type="PRO" id="PR:P24232"/>
<dbReference type="Proteomes" id="UP000000625">
    <property type="component" value="Chromosome"/>
</dbReference>
<dbReference type="GO" id="GO:0005737">
    <property type="term" value="C:cytoplasm"/>
    <property type="evidence" value="ECO:0000318"/>
    <property type="project" value="GO_Central"/>
</dbReference>
<dbReference type="GO" id="GO:0071949">
    <property type="term" value="F:FAD binding"/>
    <property type="evidence" value="ECO:0000314"/>
    <property type="project" value="EcoCyc"/>
</dbReference>
<dbReference type="GO" id="GO:0005504">
    <property type="term" value="F:fatty acid binding"/>
    <property type="evidence" value="ECO:0000314"/>
    <property type="project" value="EcoCyc"/>
</dbReference>
<dbReference type="GO" id="GO:0020037">
    <property type="term" value="F:heme binding"/>
    <property type="evidence" value="ECO:0000314"/>
    <property type="project" value="EcoCyc"/>
</dbReference>
<dbReference type="GO" id="GO:0032843">
    <property type="term" value="F:hydroperoxide reductase activity"/>
    <property type="evidence" value="ECO:0000314"/>
    <property type="project" value="EcoCyc"/>
</dbReference>
<dbReference type="GO" id="GO:0046872">
    <property type="term" value="F:metal ion binding"/>
    <property type="evidence" value="ECO:0007669"/>
    <property type="project" value="UniProtKB-KW"/>
</dbReference>
<dbReference type="GO" id="GO:0008941">
    <property type="term" value="F:nitric oxide dioxygenase NAD(P)H activity"/>
    <property type="evidence" value="ECO:0000314"/>
    <property type="project" value="EcoCyc"/>
</dbReference>
<dbReference type="GO" id="GO:0019825">
    <property type="term" value="F:oxygen binding"/>
    <property type="evidence" value="ECO:0007669"/>
    <property type="project" value="InterPro"/>
</dbReference>
<dbReference type="GO" id="GO:0005344">
    <property type="term" value="F:oxygen carrier activity"/>
    <property type="evidence" value="ECO:0007669"/>
    <property type="project" value="UniProtKB-UniRule"/>
</dbReference>
<dbReference type="GO" id="GO:0071500">
    <property type="term" value="P:cellular response to nitrosative stress"/>
    <property type="evidence" value="ECO:0000318"/>
    <property type="project" value="GO_Central"/>
</dbReference>
<dbReference type="GO" id="GO:0046210">
    <property type="term" value="P:nitric oxide catabolic process"/>
    <property type="evidence" value="ECO:0000318"/>
    <property type="project" value="GO_Central"/>
</dbReference>
<dbReference type="GO" id="GO:0051409">
    <property type="term" value="P:response to nitrosative stress"/>
    <property type="evidence" value="ECO:0000315"/>
    <property type="project" value="EcoCyc"/>
</dbReference>
<dbReference type="GO" id="GO:0009636">
    <property type="term" value="P:response to toxic substance"/>
    <property type="evidence" value="ECO:0007669"/>
    <property type="project" value="UniProtKB-KW"/>
</dbReference>
<dbReference type="CDD" id="cd06184">
    <property type="entry name" value="flavohem_like_fad_nad_binding"/>
    <property type="match status" value="1"/>
</dbReference>
<dbReference type="CDD" id="cd14776">
    <property type="entry name" value="HmpEc-globin-like"/>
    <property type="match status" value="1"/>
</dbReference>
<dbReference type="FunFam" id="1.10.490.10:FF:000003">
    <property type="entry name" value="Flavohemoprotein"/>
    <property type="match status" value="1"/>
</dbReference>
<dbReference type="FunFam" id="2.40.30.10:FF:000034">
    <property type="entry name" value="Flavohemoprotein"/>
    <property type="match status" value="1"/>
</dbReference>
<dbReference type="FunFam" id="3.40.50.80:FF:000010">
    <property type="entry name" value="Flavohemoprotein"/>
    <property type="match status" value="1"/>
</dbReference>
<dbReference type="Gene3D" id="1.10.490.10">
    <property type="entry name" value="Globins"/>
    <property type="match status" value="1"/>
</dbReference>
<dbReference type="Gene3D" id="3.40.50.80">
    <property type="entry name" value="Nucleotide-binding domain of ferredoxin-NADP reductase (FNR) module"/>
    <property type="match status" value="1"/>
</dbReference>
<dbReference type="Gene3D" id="2.40.30.10">
    <property type="entry name" value="Translation factors"/>
    <property type="match status" value="1"/>
</dbReference>
<dbReference type="HAMAP" id="MF_01252">
    <property type="entry name" value="Hmp"/>
    <property type="match status" value="1"/>
</dbReference>
<dbReference type="InterPro" id="IPR008333">
    <property type="entry name" value="Cbr1-like_FAD-bd_dom"/>
</dbReference>
<dbReference type="InterPro" id="IPR017927">
    <property type="entry name" value="FAD-bd_FR_type"/>
</dbReference>
<dbReference type="InterPro" id="IPR039261">
    <property type="entry name" value="FNR_nucleotide-bd"/>
</dbReference>
<dbReference type="InterPro" id="IPR000971">
    <property type="entry name" value="Globin"/>
</dbReference>
<dbReference type="InterPro" id="IPR009050">
    <property type="entry name" value="Globin-like_sf"/>
</dbReference>
<dbReference type="InterPro" id="IPR012292">
    <property type="entry name" value="Globin/Proto"/>
</dbReference>
<dbReference type="InterPro" id="IPR023950">
    <property type="entry name" value="Hmp"/>
</dbReference>
<dbReference type="InterPro" id="IPR001433">
    <property type="entry name" value="OxRdtase_FAD/NAD-bd"/>
</dbReference>
<dbReference type="InterPro" id="IPR017938">
    <property type="entry name" value="Riboflavin_synthase-like_b-brl"/>
</dbReference>
<dbReference type="NCBIfam" id="NF009805">
    <property type="entry name" value="PRK13289.1"/>
    <property type="match status" value="1"/>
</dbReference>
<dbReference type="PANTHER" id="PTHR43396">
    <property type="entry name" value="FLAVOHEMOPROTEIN"/>
    <property type="match status" value="1"/>
</dbReference>
<dbReference type="PANTHER" id="PTHR43396:SF3">
    <property type="entry name" value="FLAVOHEMOPROTEIN"/>
    <property type="match status" value="1"/>
</dbReference>
<dbReference type="Pfam" id="PF00970">
    <property type="entry name" value="FAD_binding_6"/>
    <property type="match status" value="1"/>
</dbReference>
<dbReference type="Pfam" id="PF00042">
    <property type="entry name" value="Globin"/>
    <property type="match status" value="1"/>
</dbReference>
<dbReference type="Pfam" id="PF00175">
    <property type="entry name" value="NAD_binding_1"/>
    <property type="match status" value="1"/>
</dbReference>
<dbReference type="PRINTS" id="PR00410">
    <property type="entry name" value="PHEHYDRXLASE"/>
</dbReference>
<dbReference type="SUPFAM" id="SSF52343">
    <property type="entry name" value="Ferredoxin reductase-like, C-terminal NADP-linked domain"/>
    <property type="match status" value="1"/>
</dbReference>
<dbReference type="SUPFAM" id="SSF46458">
    <property type="entry name" value="Globin-like"/>
    <property type="match status" value="1"/>
</dbReference>
<dbReference type="SUPFAM" id="SSF63380">
    <property type="entry name" value="Riboflavin synthase domain-like"/>
    <property type="match status" value="1"/>
</dbReference>
<dbReference type="PROSITE" id="PS51384">
    <property type="entry name" value="FAD_FR"/>
    <property type="match status" value="1"/>
</dbReference>
<dbReference type="PROSITE" id="PS01033">
    <property type="entry name" value="GLOBIN"/>
    <property type="match status" value="1"/>
</dbReference>
<gene>
    <name type="primary">hmp</name>
    <name type="synonym">fsrB</name>
    <name type="synonym">hmpA</name>
    <name type="ordered locus">b2552</name>
    <name type="ordered locus">JW2536</name>
</gene>
<accession>P24232</accession>
<name>HMP_ECOLI</name>
<organism>
    <name type="scientific">Escherichia coli (strain K12)</name>
    <dbReference type="NCBI Taxonomy" id="83333"/>
    <lineage>
        <taxon>Bacteria</taxon>
        <taxon>Pseudomonadati</taxon>
        <taxon>Pseudomonadota</taxon>
        <taxon>Gammaproteobacteria</taxon>
        <taxon>Enterobacterales</taxon>
        <taxon>Enterobacteriaceae</taxon>
        <taxon>Escherichia</taxon>
    </lineage>
</organism>
<evidence type="ECO:0000250" key="1"/>
<evidence type="ECO:0000255" key="2">
    <source>
        <dbReference type="PROSITE-ProRule" id="PRU00238"/>
    </source>
</evidence>
<evidence type="ECO:0000269" key="3">
    <source>
    </source>
</evidence>
<evidence type="ECO:0000269" key="4">
    <source>
    </source>
</evidence>
<evidence type="ECO:0000269" key="5">
    <source>
    </source>
</evidence>
<evidence type="ECO:0000269" key="6">
    <source>
    </source>
</evidence>
<evidence type="ECO:0000269" key="7">
    <source>
    </source>
</evidence>
<evidence type="ECO:0000269" key="8">
    <source>
    </source>
</evidence>
<evidence type="ECO:0000269" key="9">
    <source>
    </source>
</evidence>
<evidence type="ECO:0000305" key="10"/>
<evidence type="ECO:0007829" key="11">
    <source>
        <dbReference type="PDB" id="1GVH"/>
    </source>
</evidence>
<sequence>MLDAQTIATVKATIPLLVETGPKLTAHFYDRMFTHNPELKEIFNMSNQRNGDQREALFNAIAAYASNIENLPALLPAVEKIAQKHTSFQIKPEQYNIVGEHLLATLDEMFSPGQEVLDAWGKAYGVLANVFINREAEIYNENASKAGGWEGTRDFRIVAKTPRSALITSFELEPVDGGAVAEYRPGQYLGVWLKPEGFPHQEIRQYSLTRKPDGKGYRIAVKREEGGQVSNWLHNHANVGDVVKLVAPAGDFFMAVADDTPVTLISAGVGQTPMLAMLDTLAKAGHTAQVNWFHAAENGDVHAFADEVKELGQSLPRFTAHTWYRQPSEADRAKGQFDSEGLMDLSKLEGAFSDPTMQFYLCGPVGFMQFTAKQLVDLGVKQENIHYECFGPHKVL</sequence>
<comment type="function">
    <text>Is involved in NO detoxification in an aerobic process, termed nitric oxide dioxygenase (NOD) reaction that utilizes O(2) and NAD(P)H to convert NO to nitrate, which protects the bacterium from various noxious nitrogen compounds. Therefore, plays a central role in the inducible response to nitrosative stress.</text>
</comment>
<comment type="function">
    <text>In the presence of oxygen and NADH, HMP has NADH oxidase activity, which leads to the generation of superoxide and H(2)O(2), both in vitro and in vivo, and it has been suggested that HMP might act as an amplifier of superoxide stress. Under anaerobic conditions, HMP also exhibits nitric oxide reductase and FAD reductase activities. However, all these reactions are much lower than NOD activity.</text>
</comment>
<comment type="function">
    <text>Various electron acceptors are also reduced by HMP in vitro, including dihydropterine, ferrisiderophores, ferric citrate, cytochrome c, nitrite, S-nitrosoglutathione, and alkylhydroperoxides. However, it is unknown if these reactions are of any biological significance in vivo.</text>
</comment>
<comment type="catalytic activity">
    <reaction evidence="5">
        <text>2 nitric oxide + NADPH + 2 O2 = 2 nitrate + NADP(+) + H(+)</text>
        <dbReference type="Rhea" id="RHEA:19465"/>
        <dbReference type="ChEBI" id="CHEBI:15378"/>
        <dbReference type="ChEBI" id="CHEBI:15379"/>
        <dbReference type="ChEBI" id="CHEBI:16480"/>
        <dbReference type="ChEBI" id="CHEBI:17632"/>
        <dbReference type="ChEBI" id="CHEBI:57783"/>
        <dbReference type="ChEBI" id="CHEBI:58349"/>
        <dbReference type="EC" id="1.14.12.17"/>
    </reaction>
</comment>
<comment type="catalytic activity">
    <reaction evidence="5">
        <text>2 nitric oxide + NADH + 2 O2 = 2 nitrate + NAD(+) + H(+)</text>
        <dbReference type="Rhea" id="RHEA:19469"/>
        <dbReference type="ChEBI" id="CHEBI:15378"/>
        <dbReference type="ChEBI" id="CHEBI:15379"/>
        <dbReference type="ChEBI" id="CHEBI:16480"/>
        <dbReference type="ChEBI" id="CHEBI:17632"/>
        <dbReference type="ChEBI" id="CHEBI:57540"/>
        <dbReference type="ChEBI" id="CHEBI:57945"/>
        <dbReference type="EC" id="1.14.12.17"/>
    </reaction>
</comment>
<comment type="cofactor">
    <cofactor>
        <name>FAD</name>
        <dbReference type="ChEBI" id="CHEBI:57692"/>
    </cofactor>
    <text>Binds 1 FAD per subunit.</text>
</comment>
<comment type="cofactor">
    <cofactor>
        <name>heme b</name>
        <dbReference type="ChEBI" id="CHEBI:60344"/>
    </cofactor>
    <text>Binds 1 heme b group per subunit.</text>
</comment>
<comment type="biophysicochemical properties">
    <kinetics>
        <KM evidence="3">0.28 uM for NO</KM>
        <KM evidence="3">90 uM for O(2)</KM>
        <KM evidence="3">1.8 uM for NADH</KM>
        <KM evidence="3">19.6 uM for NADPH</KM>
    </kinetics>
</comment>
<comment type="subunit">
    <text>Monomer.</text>
</comment>
<comment type="subcellular location">
    <subcellularLocation>
        <location evidence="6">Cytoplasm</location>
    </subcellularLocation>
    <text>Has also been found to localize into the periplasm, but spectral analysis revealed that biochemically active HMP is exclusively found in the cytoplasmic fraction.</text>
</comment>
<comment type="induction">
    <text evidence="7 8 9">By nitric oxyde NO (under aerobic conditions), nitrite, nitrate (under anaerobic conditions), nitroso compounds, and paraquat.</text>
</comment>
<comment type="domain">
    <text>Consists of two distinct domains; an N-terminal heme-containing oxygen-binding domain and a C-terminal reductase domain with binding sites for FAD and NAD(P)H.</text>
</comment>
<comment type="miscellaneous">
    <text>No protein-heme interactions have been detected at the distal side of the heme molecule.</text>
</comment>
<comment type="miscellaneous">
    <text>HMP is able to bind specifically unsaturated and/or cyclopropanated fatty acids with high affinity.</text>
</comment>
<comment type="similarity">
    <text evidence="10">Belongs to the globin family. Two-domain flavohemoproteins subfamily.</text>
</comment>
<comment type="similarity">
    <text evidence="10">In the C-terminal section; belongs to the flavoprotein pyridine nucleotide cytochrome reductase family.</text>
</comment>
<proteinExistence type="evidence at protein level"/>
<protein>
    <recommendedName>
        <fullName>Flavohemoprotein</fullName>
    </recommendedName>
    <alternativeName>
        <fullName>Flavohemoglobin</fullName>
    </alternativeName>
    <alternativeName>
        <fullName>HMP</fullName>
    </alternativeName>
    <alternativeName>
        <fullName>Hemoglobin-like protein</fullName>
    </alternativeName>
    <alternativeName>
        <fullName>Nitric oxide dioxygenase</fullName>
        <shortName>NO oxygenase</shortName>
        <shortName>NOD</shortName>
        <ecNumber>1.14.12.17</ecNumber>
    </alternativeName>
</protein>
<reference key="1">
    <citation type="journal article" date="1991" name="Mol. Gen. Genet.">
        <title>Isolation and nucleotide sequence of the hmp gene that encodes a haemoglobin-like protein in Escherichia coli K-12.</title>
        <authorList>
            <person name="Vasudevan S.G."/>
            <person name="Armarego W.L.F."/>
            <person name="Shaw D.C."/>
            <person name="Lilley P.E."/>
            <person name="Dixon N.E."/>
            <person name="Poole R.K."/>
        </authorList>
    </citation>
    <scope>NUCLEOTIDE SEQUENCE [GENOMIC DNA]</scope>
    <scope>PROTEIN SEQUENCE OF 1-20</scope>
    <source>
        <strain>K12</strain>
    </source>
</reference>
<reference key="2">
    <citation type="journal article" date="1997" name="DNA Res.">
        <title>Construction of a contiguous 874-kb sequence of the Escherichia coli-K12 genome corresponding to 50.0-68.8 min on the linkage map and analysis of its sequence features.</title>
        <authorList>
            <person name="Yamamoto Y."/>
            <person name="Aiba H."/>
            <person name="Baba T."/>
            <person name="Hayashi K."/>
            <person name="Inada T."/>
            <person name="Isono K."/>
            <person name="Itoh T."/>
            <person name="Kimura S."/>
            <person name="Kitagawa M."/>
            <person name="Makino K."/>
            <person name="Miki T."/>
            <person name="Mitsuhashi N."/>
            <person name="Mizobuchi K."/>
            <person name="Mori H."/>
            <person name="Nakade S."/>
            <person name="Nakamura Y."/>
            <person name="Nashimoto H."/>
            <person name="Oshima T."/>
            <person name="Oyama S."/>
            <person name="Saito N."/>
            <person name="Sampei G."/>
            <person name="Satoh Y."/>
            <person name="Sivasundaram S."/>
            <person name="Tagami H."/>
            <person name="Takahashi H."/>
            <person name="Takeda J."/>
            <person name="Takemoto K."/>
            <person name="Uehara K."/>
            <person name="Wada C."/>
            <person name="Yamagata S."/>
            <person name="Horiuchi T."/>
        </authorList>
    </citation>
    <scope>NUCLEOTIDE SEQUENCE [LARGE SCALE GENOMIC DNA]</scope>
    <source>
        <strain>K12 / W3110 / ATCC 27325 / DSM 5911</strain>
    </source>
</reference>
<reference key="3">
    <citation type="journal article" date="1997" name="Science">
        <title>The complete genome sequence of Escherichia coli K-12.</title>
        <authorList>
            <person name="Blattner F.R."/>
            <person name="Plunkett G. III"/>
            <person name="Bloch C.A."/>
            <person name="Perna N.T."/>
            <person name="Burland V."/>
            <person name="Riley M."/>
            <person name="Collado-Vides J."/>
            <person name="Glasner J.D."/>
            <person name="Rode C.K."/>
            <person name="Mayhew G.F."/>
            <person name="Gregor J."/>
            <person name="Davis N.W."/>
            <person name="Kirkpatrick H.A."/>
            <person name="Goeden M.A."/>
            <person name="Rose D.J."/>
            <person name="Mau B."/>
            <person name="Shao Y."/>
        </authorList>
    </citation>
    <scope>NUCLEOTIDE SEQUENCE [LARGE SCALE GENOMIC DNA]</scope>
    <source>
        <strain>K12 / MG1655 / ATCC 47076</strain>
    </source>
</reference>
<reference key="4">
    <citation type="journal article" date="2006" name="Mol. Syst. Biol.">
        <title>Highly accurate genome sequences of Escherichia coli K-12 strains MG1655 and W3110.</title>
        <authorList>
            <person name="Hayashi K."/>
            <person name="Morooka N."/>
            <person name="Yamamoto Y."/>
            <person name="Fujita K."/>
            <person name="Isono K."/>
            <person name="Choi S."/>
            <person name="Ohtsubo E."/>
            <person name="Baba T."/>
            <person name="Wanner B.L."/>
            <person name="Mori H."/>
            <person name="Horiuchi T."/>
        </authorList>
    </citation>
    <scope>NUCLEOTIDE SEQUENCE [LARGE SCALE GENOMIC DNA]</scope>
    <source>
        <strain>K12 / W3110 / ATCC 27325 / DSM 5911</strain>
    </source>
</reference>
<reference key="5">
    <citation type="journal article" date="1983" name="Gene">
        <title>Characterization of the Escherichia coli gene for serine hydroxymethyltransferase.</title>
        <authorList>
            <person name="Plamann M.D."/>
            <person name="Stauffer G.V."/>
        </authorList>
    </citation>
    <scope>NUCLEOTIDE SEQUENCE [GENOMIC DNA] OF 1-10</scope>
</reference>
<reference key="6">
    <citation type="journal article" date="1992" name="FEBS Lett.">
        <title>The haemoglobin-like protein (HMP) of Escherichia coli has ferrisiderophore reductase activity and its C-terminal domain shares homology with ferredoxin NADP+ reductases.</title>
        <authorList>
            <person name="Andrews S.C."/>
            <person name="Shipley D."/>
            <person name="Keen J.N."/>
            <person name="Findlay J.B.C."/>
            <person name="Harrison P.M."/>
            <person name="Guest J.R."/>
        </authorList>
    </citation>
    <scope>PARTIAL PROTEIN SEQUENCE</scope>
    <scope>FUNCTION AS A FERRISIDEROPHORE REDUCTASE</scope>
    <source>
        <strain>K12</strain>
    </source>
</reference>
<reference key="7">
    <citation type="journal article" date="1997" name="Electrophoresis">
        <title>Comparing the predicted and observed properties of proteins encoded in the genome of Escherichia coli K-12.</title>
        <authorList>
            <person name="Link A.J."/>
            <person name="Robison K."/>
            <person name="Church G.M."/>
        </authorList>
    </citation>
    <scope>PROTEIN SEQUENCE OF 1-12</scope>
    <source>
        <strain>K12 / EMG2</strain>
    </source>
</reference>
<reference key="8">
    <citation type="journal article" date="1998" name="Proc. Natl. Acad. Sci. U.S.A.">
        <title>Nitric oxide dioxygenase: an enzymic function for flavohemoglobin.</title>
        <authorList>
            <person name="Gardner P.R."/>
            <person name="Gardner A.M."/>
            <person name="Martin L.A."/>
            <person name="Salzman A.L."/>
        </authorList>
    </citation>
    <scope>PROTEIN SEQUENCE OF 1-20</scope>
    <scope>CHARACTERIZATION</scope>
</reference>
<reference key="9">
    <citation type="journal article" date="1992" name="Biochem. Biophys. Res. Commun.">
        <title>The oxygenated flavohaemoglobin from Escherichia coli: evidence from photodissociation and rapid-scan studies for two kinetic and spectral forms.</title>
        <authorList>
            <person name="Orii Y."/>
            <person name="Ioannidis N."/>
            <person name="Poole R.K."/>
        </authorList>
    </citation>
    <scope>RAPID-SCAN AND FLASH PHOTOLYSIS SPECTROSCOPY</scope>
</reference>
<reference key="10">
    <citation type="journal article" date="1994" name="Biochem. Biophys. Res. Commun.">
        <title>Ferric reductases in Escherichia coli: the contribution of the haemoglobin-like protein.</title>
        <authorList>
            <person name="Eschenbrenner M."/>
            <person name="Coves J."/>
            <person name="Fontecave M."/>
        </authorList>
    </citation>
    <scope>FUNCTION AS A FERRIC CITRATE REDUCTASE</scope>
</reference>
<reference key="11">
    <citation type="journal article" date="1995" name="FEMS Microbiol. Lett.">
        <title>Distribution of the flavohaemoglobin, HMP, between periplasm and cytoplasm in Escherichia coli.</title>
        <authorList>
            <person name="Vasudevan S.G."/>
            <person name="Tang P."/>
            <person name="Dixon N.E."/>
            <person name="Poole R.K."/>
        </authorList>
    </citation>
    <scope>SUBCELLULAR LOCATION</scope>
</reference>
<reference key="12">
    <citation type="journal article" date="1996" name="FEBS Lett.">
        <title>The flavohaemoglobin (HMP) of Escherichia coli generates superoxide in vitro and causes oxidative stress in vivo.</title>
        <authorList>
            <person name="Membrillo-Hernandez J."/>
            <person name="Ioannidis N."/>
            <person name="Poole R.K."/>
        </authorList>
    </citation>
    <scope>FUNCTION AS A NADH OXIDASE</scope>
    <scope>ROLE IN OXIDATIVE STRESS</scope>
</reference>
<reference key="13">
    <citation type="journal article" date="1996" name="J. Bacteriol.">
        <title>Nitric oxide, nitrite, and Fnr regulation of hmp (flavohemoglobin) gene expression in Escherichia coli K-12.</title>
        <authorList>
            <person name="Poole R.K."/>
            <person name="Anjum M.F."/>
            <person name="Membrillo-Hernandez J."/>
            <person name="Kim S.O."/>
            <person name="Hughes M.N."/>
            <person name="Stewart V."/>
        </authorList>
    </citation>
    <scope>TRANSCRIPTIONAL REGULATION</scope>
    <source>
        <strain>K12</strain>
    </source>
</reference>
<reference key="14">
    <citation type="journal article" date="1996" name="Microbiology">
        <title>Reactions of the Escherichia coli flavohaemoglobin (Hmp) with NADH and near-micromolar oxygen: oxygen affinity of NADH oxidase activity.</title>
        <authorList>
            <person name="Poole R.K."/>
            <person name="Ioannidis N."/>
            <person name="Orii Y."/>
        </authorList>
    </citation>
    <scope>FUNCTION AS A AEROBIC NADH OXIDASE AND ANAEROBIC FAD REDUCTASE</scope>
</reference>
<reference key="15">
    <citation type="journal article" date="1997" name="J. Bacteriol.">
        <title>Paraquat regulation of hmp (flavohemoglobin) gene expression in Escherichia coli K-12 is SoxRS independent but modulated by sigma S.</title>
        <authorList>
            <person name="Membrillo-Hernandez J."/>
            <person name="Kim S.O."/>
            <person name="Cook G.M."/>
            <person name="Poole R.K."/>
        </authorList>
    </citation>
    <scope>TRANSCRIPTIONAL REGULATION</scope>
    <source>
        <strain>K12</strain>
    </source>
</reference>
<reference key="16">
    <citation type="journal article" date="1997" name="Microbiology">
        <title>Escherichia coli flavohaemoglobin (Hmp) reduces cytochrome c and Fe(III)-hydroxamate K by electron transfer from NADH via FAD: sensitivity of oxidoreductase activity to haem-bound dioxygen.</title>
        <authorList>
            <person name="Poole R.K."/>
            <person name="Rogers N.J."/>
            <person name="D'mello R.A.M."/>
            <person name="Hughes M.N."/>
            <person name="Orii Y."/>
        </authorList>
    </citation>
    <scope>FUNCTION AS A CYTOCHROME C REDUCTASE AND FERRISIDEROPHORE REDUCTASE</scope>
</reference>
<reference key="17">
    <citation type="journal article" date="1998" name="FEMS Microbiol. Lett.">
        <title>Response of the NAD(P)H-oxidising flavohaemoglobin (Hmp) to prolonged oxidative stress and implications for its physiological role in Escherichia coli.</title>
        <authorList>
            <person name="Anjum M.F."/>
            <person name="Ioannidis N."/>
            <person name="Poole R.K."/>
        </authorList>
    </citation>
    <scope>FUNCTION AS A NADH AND NADPH OXIDASE</scope>
</reference>
<reference key="18">
    <citation type="journal article" date="1998" name="J. Biol. Chem.">
        <title>Constitutive and adaptive detoxification of nitric oxide in Escherichia coli. Role of nitric-oxide dioxygenase in the protection of aconitase.</title>
        <authorList>
            <person name="Gardner P.R."/>
            <person name="Costantino G."/>
            <person name="Salzman A.L."/>
        </authorList>
    </citation>
    <scope>ROLE IN NITRIC OXIDE DETOXIFICATION</scope>
</reference>
<reference key="19">
    <citation type="journal article" date="1998" name="Mol. Microbiol.">
        <title>A novel mechanism for upregulation of the Escherichia coli K-12 hmp (flavohaemoglobin) gene by the 'NO releaser', S-nitrosoglutathione: nitrosation of homocysteine and modulation of MetR binding to the glyA-hmp intergenic region.</title>
        <authorList>
            <person name="Membrillo-Hernandez J."/>
            <person name="Coopamah M.D."/>
            <person name="Channa A."/>
            <person name="Hughes M.N."/>
            <person name="Poole R.K."/>
        </authorList>
    </citation>
    <scope>TRANSCRIPTIONAL REGULATION BY NITRIC OXIDE DONORS</scope>
    <source>
        <strain>K12</strain>
    </source>
</reference>
<reference key="20">
    <citation type="journal article" date="1998" name="Proc. Natl. Acad. Sci. U.S.A.">
        <title>Nitrosative stress: metabolic pathway involving the flavohemoglobin.</title>
        <authorList>
            <person name="Hausladen A."/>
            <person name="Gow A."/>
            <person name="Stamler J.S."/>
        </authorList>
    </citation>
    <scope>FUNCTION AS A NITRIC OXIDE DIOXYGENASE</scope>
</reference>
<reference key="21">
    <citation type="journal article" date="1999" name="FEBS Lett.">
        <title>Anoxic function for the Escherichia coli flavohaemoglobin (Hmp): reversible binding of nitric oxide and reduction to nitrous oxide.</title>
        <authorList>
            <person name="Kim S.O."/>
            <person name="Orii Y."/>
            <person name="Lloyd D."/>
            <person name="Hughes M.N."/>
            <person name="Poole R.K."/>
        </authorList>
    </citation>
    <scope>FUNCTION AS AN ANAEROBIC NITRIC OXIDE REDUCTASE</scope>
</reference>
<reference key="22">
    <citation type="journal article" date="1999" name="J. Biol. Chem.">
        <title>The flavohemoglobin of Escherichia coli confers resistance to a nitrosating agent, a 'nitric oxide releaser', and paraquat and is essential for transcriptional responses to oxidative stress.</title>
        <authorList>
            <person name="Membrillo-Hernandez J."/>
            <person name="Coopamah M.D."/>
            <person name="Anjum M.F."/>
            <person name="Stevanin T.M."/>
            <person name="Kelly A."/>
            <person name="Hughes M.N."/>
            <person name="Poole R.K."/>
        </authorList>
    </citation>
    <scope>ROLE IN RESISTANCE TO NITRIC OXIDE AND PARAQUAT</scope>
</reference>
<reference key="23">
    <citation type="journal article" date="2000" name="J. Biol. Chem.">
        <title>Steady-state and transient kinetics of Escherichia coli nitric-oxide dioxygenase (flavohemoglobin). The B10 tyrosine hydroxyl is essential for dioxygen binding and catalysis.</title>
        <authorList>
            <person name="Gardner A.M."/>
            <person name="Martin L.A."/>
            <person name="Gardner P.R."/>
            <person name="Dou Y."/>
            <person name="Olson J.S."/>
        </authorList>
    </citation>
    <scope>BIOPHYSICOCHEMICAL PROPERTIES</scope>
    <scope>MUTAGENESIS OF TYR-29</scope>
</reference>
<reference key="24">
    <citation type="journal article" date="2000" name="J. Biol. Chem.">
        <title>Nitric-oxide dioxygenase activity and function of flavohemoglobins. Sensitivity to nitric oxide and carbon monoxide inhibition.</title>
        <authorList>
            <person name="Gardner P.R."/>
            <person name="Gardner A.M."/>
            <person name="Martin L.A."/>
            <person name="Dou Y."/>
            <person name="Li T."/>
            <person name="Olson J.S."/>
            <person name="Zhu H."/>
            <person name="Riggs A.F."/>
        </authorList>
    </citation>
    <scope>CHARACTERIZATION</scope>
</reference>
<reference key="25">
    <citation type="journal article" date="2000" name="J. Biol. Chem.">
        <title>Flavohemoglobin Hmp affords inducible protection for Escherichia coli respiration, catalyzed by cytochromes bo' or bd, from nitric oxide.</title>
        <authorList>
            <person name="Stevanin T.M."/>
            <person name="Ioannidis N."/>
            <person name="Mills C.E."/>
            <person name="Kim S.O."/>
            <person name="Hughes M.N."/>
            <person name="Poole R.K."/>
        </authorList>
    </citation>
    <scope>ROLE IN NITRIC OXIDE DETOXIFICATION</scope>
</reference>
<reference key="26">
    <citation type="journal article" date="2001" name="Biochem. J.">
        <title>Escherichia coli flavohaemoglobin (Hmp) with equistoichiometric FAD and haem contents has a low affinity for dioxygen in the absence or presence of nitric oxide.</title>
        <authorList>
            <person name="Mills C.E."/>
            <person name="Sedelnikova S."/>
            <person name="Soeballe B."/>
            <person name="Hughes M.N."/>
            <person name="Poole R.K."/>
        </authorList>
    </citation>
    <scope>CHARACTERIZATION</scope>
</reference>
<reference key="27">
    <citation type="journal article" date="2001" name="Biochim. Biophys. Acta">
        <title>The distal heme pocket of Escherichia coli flavohemoglobin probed by infrared spectroscopy.</title>
        <authorList>
            <person name="Bonamore A."/>
            <person name="Chiancone E."/>
            <person name="Boffi A."/>
        </authorList>
    </citation>
    <scope>INFRARED SPECTROSCOPY</scope>
</reference>
<reference key="28">
    <citation type="journal article" date="2001" name="J. Biol. Chem.">
        <title>Flavohemoglobin, a globin with a peroxidase-like catalytic site.</title>
        <authorList>
            <person name="Mukai M."/>
            <person name="Mills C.E."/>
            <person name="Poole R.K."/>
            <person name="Yeh S.-R."/>
        </authorList>
    </citation>
    <scope>ACTIVE SITE</scope>
    <scope>RESONANCE RAMAN SPECTROSCOPY</scope>
</reference>
<reference key="29">
    <citation type="journal article" date="2001" name="Proc. Natl. Acad. Sci. U.S.A.">
        <title>Flavohemoglobin denitrosylase catalyzes the reaction of a nitroxyl equivalent with molecular oxygen.</title>
        <authorList>
            <person name="Hausladen A."/>
            <person name="Gow A."/>
            <person name="Stamler J.S."/>
        </authorList>
    </citation>
    <scope>DENITROSYLASE ACTIVITY</scope>
</reference>
<reference key="30">
    <citation type="journal article" date="2002" name="J. Biol. Chem.">
        <title>Flavohemoglobin detoxifies nitric oxide in aerobic, but not anaerobic, Escherichia coli. Evidence for a novel inducible anaerobic nitric oxide-scavenging activity.</title>
        <authorList>
            <person name="Gardner A.M."/>
            <person name="Gardner P.R."/>
        </authorList>
    </citation>
    <scope>ENZYME ACTIVITY</scope>
    <scope>ROLE IN AEROBIC NITRIC OXIDE DETOXIFICATION</scope>
</reference>
<reference key="31">
    <citation type="journal article" date="2003" name="Biochemistry">
        <title>Interaction with membrane lipids and heme ligand binding properties of Escherichia coli flavohemoglobin.</title>
        <authorList>
            <person name="Bonamore A."/>
            <person name="Farina A."/>
            <person name="Gattoni M."/>
            <person name="Schinina M.E."/>
            <person name="Bellelli A."/>
            <person name="Boffi A."/>
        </authorList>
    </citation>
    <scope>INTERACTION WITH LIPIDS</scope>
</reference>
<reference key="32">
    <citation type="journal article" date="2003" name="J. Biol. Chem.">
        <title>Escherichia coli flavohemoglobin is an efficient alkylhydroperoxide reductase.</title>
        <authorList>
            <person name="Bonamore A."/>
            <person name="Gentili P."/>
            <person name="Ilari A."/>
            <person name="Schinina M.E."/>
            <person name="Boffi A."/>
        </authorList>
    </citation>
    <scope>ALKYLHYDROPEROXIDE REDUCTASE ACTIVITY</scope>
</reference>
<reference key="33">
    <citation type="journal article" date="2003" name="J. Biol. Chem.">
        <title>Nitric oxide formation by Escherichia coli. Dependence on nitrite reductase, the NO-sensing regulator Fnr, and flavohemoglobin Hmp.</title>
        <authorList>
            <person name="Corker H."/>
            <person name="Poole R.K."/>
        </authorList>
    </citation>
    <scope>ROLE IN NITRIC OXIDE FORMATION</scope>
</reference>
<reference key="34">
    <citation type="journal article" date="2003" name="J. Biol. Chem.">
        <title>Flavohemoglobin Hmp, but not its individual domains, confers protection from respiratory inhibition by nitric oxide in Escherichia coli.</title>
        <authorList>
            <person name="Hernandez-Urzua E."/>
            <person name="Mills C.E."/>
            <person name="White G.P."/>
            <person name="Contreras-Zentella M.L."/>
            <person name="Escamilla E."/>
            <person name="Vasudevan S.G."/>
            <person name="Membrillo-Hernandez J."/>
            <person name="Poole R.K."/>
        </authorList>
    </citation>
    <scope>CHARACTERIZATION OF SEPARATE FUNCTIONAL DOMAINS</scope>
</reference>
<reference key="35">
    <citation type="journal article" date="2002" name="J. Biol. Chem.">
        <title>The X-ray structure of ferric Escherichia coli flavohemoglobin reveals an unexpected geometry of the distal heme pocket.</title>
        <authorList>
            <person name="Ilari A."/>
            <person name="Bonamore A."/>
            <person name="Farina A."/>
            <person name="Johnson K.A."/>
            <person name="Boffi A."/>
        </authorList>
    </citation>
    <scope>X-RAY CRYSTALLOGRAPHY (2.19 ANGSTROMS)</scope>
</reference>
<reference key="36">
    <citation type="journal article" date="2000" name="Mol. Microbiol.">
        <title>New functions for the ancient globin family: bacterial responses to nitric oxide and nitrosative stress.</title>
        <authorList>
            <person name="Poole R.K."/>
            <person name="Hughes M.N."/>
        </authorList>
    </citation>
    <scope>REVIEW</scope>
</reference>
<reference key="37">
    <citation type="journal article" date="2003" name="FEMS Microbiol. Rev.">
        <title>Bacterial hemoglobins and flavohemoglobins: versatile proteins and their impact on microbiology and biotechnology.</title>
        <authorList>
            <person name="Frey A.D."/>
            <person name="Kallio P.T."/>
        </authorList>
    </citation>
    <scope>REVIEW</scope>
</reference>